<proteinExistence type="inferred from homology"/>
<comment type="function">
    <text evidence="1">Catalyzes the phosphorylation of N-acetyl-D-glucosamine (GlcNAc) derived from cell-wall degradation, yielding GlcNAc-6-P.</text>
</comment>
<comment type="catalytic activity">
    <reaction evidence="1">
        <text>N-acetyl-D-glucosamine + ATP = N-acetyl-D-glucosamine 6-phosphate + ADP + H(+)</text>
        <dbReference type="Rhea" id="RHEA:17417"/>
        <dbReference type="ChEBI" id="CHEBI:15378"/>
        <dbReference type="ChEBI" id="CHEBI:30616"/>
        <dbReference type="ChEBI" id="CHEBI:57513"/>
        <dbReference type="ChEBI" id="CHEBI:456216"/>
        <dbReference type="ChEBI" id="CHEBI:506227"/>
        <dbReference type="EC" id="2.7.1.59"/>
    </reaction>
</comment>
<comment type="pathway">
    <text evidence="1">Cell wall biogenesis; peptidoglycan recycling.</text>
</comment>
<comment type="similarity">
    <text evidence="1">Belongs to the ROK (NagC/XylR) family. NagK subfamily.</text>
</comment>
<name>NAGK_SHIFL</name>
<sequence>MYYGFDIGGTKIALGVFDSGRQLQWEKRVPTPRDSYDAFLDAVCELVAEADQRFGCKGSVGIGIPGMPETEDGKLYAANVPAASGKPLRADLSARLDRDVRLDNDANCFALSEAWDDEFTQYPLVMGLILGTGVGGGLVFNGKPITGKSYITGEFGHMRLPVDALTMMGLDFPLRRCGCGQHGCIENYLSGRGFAWLYQHYYHQPLQAPEIIALYDQGDEQARAHVERYLDLLAVSLGNILTIVDPDLVVIGGGLSNFPAITTQLADRLPCHLLPVARVPRIERARHGDAGGMRGAAFLHLTD</sequence>
<evidence type="ECO:0000255" key="1">
    <source>
        <dbReference type="HAMAP-Rule" id="MF_01271"/>
    </source>
</evidence>
<accession>Q83RR9</accession>
<accession>Q7C210</accession>
<reference key="1">
    <citation type="journal article" date="2002" name="Nucleic Acids Res.">
        <title>Genome sequence of Shigella flexneri 2a: insights into pathogenicity through comparison with genomes of Escherichia coli K12 and O157.</title>
        <authorList>
            <person name="Jin Q."/>
            <person name="Yuan Z."/>
            <person name="Xu J."/>
            <person name="Wang Y."/>
            <person name="Shen Y."/>
            <person name="Lu W."/>
            <person name="Wang J."/>
            <person name="Liu H."/>
            <person name="Yang J."/>
            <person name="Yang F."/>
            <person name="Zhang X."/>
            <person name="Zhang J."/>
            <person name="Yang G."/>
            <person name="Wu H."/>
            <person name="Qu D."/>
            <person name="Dong J."/>
            <person name="Sun L."/>
            <person name="Xue Y."/>
            <person name="Zhao A."/>
            <person name="Gao Y."/>
            <person name="Zhu J."/>
            <person name="Kan B."/>
            <person name="Ding K."/>
            <person name="Chen S."/>
            <person name="Cheng H."/>
            <person name="Yao Z."/>
            <person name="He B."/>
            <person name="Chen R."/>
            <person name="Ma D."/>
            <person name="Qiang B."/>
            <person name="Wen Y."/>
            <person name="Hou Y."/>
            <person name="Yu J."/>
        </authorList>
    </citation>
    <scope>NUCLEOTIDE SEQUENCE [LARGE SCALE GENOMIC DNA]</scope>
    <source>
        <strain>301 / Serotype 2a</strain>
    </source>
</reference>
<reference key="2">
    <citation type="journal article" date="2003" name="Infect. Immun.">
        <title>Complete genome sequence and comparative genomics of Shigella flexneri serotype 2a strain 2457T.</title>
        <authorList>
            <person name="Wei J."/>
            <person name="Goldberg M.B."/>
            <person name="Burland V."/>
            <person name="Venkatesan M.M."/>
            <person name="Deng W."/>
            <person name="Fournier G."/>
            <person name="Mayhew G.F."/>
            <person name="Plunkett G. III"/>
            <person name="Rose D.J."/>
            <person name="Darling A."/>
            <person name="Mau B."/>
            <person name="Perna N.T."/>
            <person name="Payne S.M."/>
            <person name="Runyen-Janecky L.J."/>
            <person name="Zhou S."/>
            <person name="Schwartz D.C."/>
            <person name="Blattner F.R."/>
        </authorList>
    </citation>
    <scope>NUCLEOTIDE SEQUENCE [LARGE SCALE GENOMIC DNA]</scope>
    <source>
        <strain>ATCC 700930 / 2457T / Serotype 2a</strain>
    </source>
</reference>
<keyword id="KW-0067">ATP-binding</keyword>
<keyword id="KW-0119">Carbohydrate metabolism</keyword>
<keyword id="KW-0418">Kinase</keyword>
<keyword id="KW-0479">Metal-binding</keyword>
<keyword id="KW-0547">Nucleotide-binding</keyword>
<keyword id="KW-1185">Reference proteome</keyword>
<keyword id="KW-0808">Transferase</keyword>
<keyword id="KW-0862">Zinc</keyword>
<organism>
    <name type="scientific">Shigella flexneri</name>
    <dbReference type="NCBI Taxonomy" id="623"/>
    <lineage>
        <taxon>Bacteria</taxon>
        <taxon>Pseudomonadati</taxon>
        <taxon>Pseudomonadota</taxon>
        <taxon>Gammaproteobacteria</taxon>
        <taxon>Enterobacterales</taxon>
        <taxon>Enterobacteriaceae</taxon>
        <taxon>Shigella</taxon>
    </lineage>
</organism>
<dbReference type="EC" id="2.7.1.59" evidence="1"/>
<dbReference type="EMBL" id="AE005674">
    <property type="protein sequence ID" value="AAN42741.1"/>
    <property type="molecule type" value="Genomic_DNA"/>
</dbReference>
<dbReference type="EMBL" id="AE014073">
    <property type="protein sequence ID" value="AAP16630.1"/>
    <property type="molecule type" value="Genomic_DNA"/>
</dbReference>
<dbReference type="RefSeq" id="WP_000291255.1">
    <property type="nucleotide sequence ID" value="NZ_WPGW01000001.1"/>
</dbReference>
<dbReference type="SMR" id="Q83RR9"/>
<dbReference type="STRING" id="198214.SF1123"/>
<dbReference type="PaxDb" id="198214-SF1123"/>
<dbReference type="KEGG" id="sfl:SF1123"/>
<dbReference type="KEGG" id="sfx:S1203"/>
<dbReference type="PATRIC" id="fig|198214.7.peg.1314"/>
<dbReference type="HOGENOM" id="CLU_036604_0_3_6"/>
<dbReference type="UniPathway" id="UPA00544"/>
<dbReference type="Proteomes" id="UP000001006">
    <property type="component" value="Chromosome"/>
</dbReference>
<dbReference type="Proteomes" id="UP000002673">
    <property type="component" value="Chromosome"/>
</dbReference>
<dbReference type="GO" id="GO:0005524">
    <property type="term" value="F:ATP binding"/>
    <property type="evidence" value="ECO:0007669"/>
    <property type="project" value="UniProtKB-UniRule"/>
</dbReference>
<dbReference type="GO" id="GO:0045127">
    <property type="term" value="F:N-acetylglucosamine kinase activity"/>
    <property type="evidence" value="ECO:0007669"/>
    <property type="project" value="UniProtKB-UniRule"/>
</dbReference>
<dbReference type="GO" id="GO:0008270">
    <property type="term" value="F:zinc ion binding"/>
    <property type="evidence" value="ECO:0007669"/>
    <property type="project" value="UniProtKB-UniRule"/>
</dbReference>
<dbReference type="GO" id="GO:0006044">
    <property type="term" value="P:N-acetylglucosamine metabolic process"/>
    <property type="evidence" value="ECO:0007669"/>
    <property type="project" value="UniProtKB-UniRule"/>
</dbReference>
<dbReference type="GO" id="GO:0009254">
    <property type="term" value="P:peptidoglycan turnover"/>
    <property type="evidence" value="ECO:0007669"/>
    <property type="project" value="UniProtKB-UniRule"/>
</dbReference>
<dbReference type="CDD" id="cd24057">
    <property type="entry name" value="ASKHA_NBD_ROK_NAGK"/>
    <property type="match status" value="1"/>
</dbReference>
<dbReference type="FunFam" id="3.30.420.40:FF:000049">
    <property type="entry name" value="N-acetyl-D-glucosamine kinase"/>
    <property type="match status" value="1"/>
</dbReference>
<dbReference type="FunFam" id="3.30.420.40:FF:000051">
    <property type="entry name" value="N-acetyl-D-glucosamine kinase"/>
    <property type="match status" value="1"/>
</dbReference>
<dbReference type="Gene3D" id="3.30.420.40">
    <property type="match status" value="2"/>
</dbReference>
<dbReference type="HAMAP" id="MF_01271">
    <property type="entry name" value="GlcNAc_kinase"/>
    <property type="match status" value="1"/>
</dbReference>
<dbReference type="InterPro" id="IPR043129">
    <property type="entry name" value="ATPase_NBD"/>
</dbReference>
<dbReference type="InterPro" id="IPR023505">
    <property type="entry name" value="N-acetyl-D-glucosamine_kinase"/>
</dbReference>
<dbReference type="InterPro" id="IPR000600">
    <property type="entry name" value="ROK"/>
</dbReference>
<dbReference type="InterPro" id="IPR049874">
    <property type="entry name" value="ROK_cs"/>
</dbReference>
<dbReference type="NCBIfam" id="NF009835">
    <property type="entry name" value="PRK13310.1"/>
    <property type="match status" value="1"/>
</dbReference>
<dbReference type="PANTHER" id="PTHR18964:SF162">
    <property type="entry name" value="N-ACETYL-D-GLUCOSAMINE KINASE"/>
    <property type="match status" value="1"/>
</dbReference>
<dbReference type="PANTHER" id="PTHR18964">
    <property type="entry name" value="ROK (REPRESSOR, ORF, KINASE) FAMILY"/>
    <property type="match status" value="1"/>
</dbReference>
<dbReference type="Pfam" id="PF00480">
    <property type="entry name" value="ROK"/>
    <property type="match status" value="1"/>
</dbReference>
<dbReference type="SUPFAM" id="SSF53067">
    <property type="entry name" value="Actin-like ATPase domain"/>
    <property type="match status" value="1"/>
</dbReference>
<dbReference type="PROSITE" id="PS01125">
    <property type="entry name" value="ROK"/>
    <property type="match status" value="1"/>
</dbReference>
<gene>
    <name evidence="1" type="primary">nagK</name>
    <name type="ordered locus">SF1123</name>
    <name type="ordered locus">S1203</name>
</gene>
<protein>
    <recommendedName>
        <fullName evidence="1">N-acetyl-D-glucosamine kinase</fullName>
        <ecNumber evidence="1">2.7.1.59</ecNumber>
    </recommendedName>
    <alternativeName>
        <fullName evidence="1">GlcNAc kinase</fullName>
    </alternativeName>
</protein>
<feature type="chain" id="PRO_0000270117" description="N-acetyl-D-glucosamine kinase">
    <location>
        <begin position="1"/>
        <end position="303"/>
    </location>
</feature>
<feature type="binding site" evidence="1">
    <location>
        <begin position="4"/>
        <end position="11"/>
    </location>
    <ligand>
        <name>ATP</name>
        <dbReference type="ChEBI" id="CHEBI:30616"/>
    </ligand>
</feature>
<feature type="binding site" evidence="1">
    <location>
        <begin position="133"/>
        <end position="140"/>
    </location>
    <ligand>
        <name>ATP</name>
        <dbReference type="ChEBI" id="CHEBI:30616"/>
    </ligand>
</feature>
<feature type="binding site" evidence="1">
    <location>
        <position position="157"/>
    </location>
    <ligand>
        <name>Zn(2+)</name>
        <dbReference type="ChEBI" id="CHEBI:29105"/>
    </ligand>
</feature>
<feature type="binding site" evidence="1">
    <location>
        <position position="177"/>
    </location>
    <ligand>
        <name>Zn(2+)</name>
        <dbReference type="ChEBI" id="CHEBI:29105"/>
    </ligand>
</feature>
<feature type="binding site" evidence="1">
    <location>
        <position position="179"/>
    </location>
    <ligand>
        <name>Zn(2+)</name>
        <dbReference type="ChEBI" id="CHEBI:29105"/>
    </ligand>
</feature>
<feature type="binding site" evidence="1">
    <location>
        <position position="184"/>
    </location>
    <ligand>
        <name>Zn(2+)</name>
        <dbReference type="ChEBI" id="CHEBI:29105"/>
    </ligand>
</feature>